<organism>
    <name type="scientific">Escherichia coli (strain K12 / DH10B)</name>
    <dbReference type="NCBI Taxonomy" id="316385"/>
    <lineage>
        <taxon>Bacteria</taxon>
        <taxon>Pseudomonadati</taxon>
        <taxon>Pseudomonadota</taxon>
        <taxon>Gammaproteobacteria</taxon>
        <taxon>Enterobacterales</taxon>
        <taxon>Enterobacteriaceae</taxon>
        <taxon>Escherichia</taxon>
    </lineage>
</organism>
<name>MEPA_ECODH</name>
<protein>
    <recommendedName>
        <fullName evidence="1">Penicillin-insensitive murein endopeptidase</fullName>
        <ecNumber evidence="1">3.4.24.-</ecNumber>
    </recommendedName>
    <alternativeName>
        <fullName evidence="1">D-alanyl-D-alanine-endopeptidase</fullName>
        <shortName evidence="1">DD-endopeptidase</shortName>
    </alternativeName>
</protein>
<reference key="1">
    <citation type="journal article" date="2008" name="J. Bacteriol.">
        <title>The complete genome sequence of Escherichia coli DH10B: insights into the biology of a laboratory workhorse.</title>
        <authorList>
            <person name="Durfee T."/>
            <person name="Nelson R."/>
            <person name="Baldwin S."/>
            <person name="Plunkett G. III"/>
            <person name="Burland V."/>
            <person name="Mau B."/>
            <person name="Petrosino J.F."/>
            <person name="Qin X."/>
            <person name="Muzny D.M."/>
            <person name="Ayele M."/>
            <person name="Gibbs R.A."/>
            <person name="Csorgo B."/>
            <person name="Posfai G."/>
            <person name="Weinstock G.M."/>
            <person name="Blattner F.R."/>
        </authorList>
    </citation>
    <scope>NUCLEOTIDE SEQUENCE [LARGE SCALE GENOMIC DNA]</scope>
    <source>
        <strain>K12 / DH10B</strain>
    </source>
</reference>
<evidence type="ECO:0000255" key="1">
    <source>
        <dbReference type="HAMAP-Rule" id="MF_01623"/>
    </source>
</evidence>
<evidence type="ECO:0000256" key="2">
    <source>
        <dbReference type="SAM" id="MobiDB-lite"/>
    </source>
</evidence>
<dbReference type="EC" id="3.4.24.-" evidence="1"/>
<dbReference type="EMBL" id="CP000948">
    <property type="protein sequence ID" value="ACB03486.1"/>
    <property type="molecule type" value="Genomic_DNA"/>
</dbReference>
<dbReference type="RefSeq" id="WP_001043825.1">
    <property type="nucleotide sequence ID" value="NC_010473.1"/>
</dbReference>
<dbReference type="SMR" id="B1X939"/>
<dbReference type="MEROPS" id="M74.001"/>
<dbReference type="KEGG" id="ecd:ECDH10B_2490"/>
<dbReference type="HOGENOM" id="CLU_052496_0_0_6"/>
<dbReference type="GO" id="GO:0030288">
    <property type="term" value="C:outer membrane-bounded periplasmic space"/>
    <property type="evidence" value="ECO:0007669"/>
    <property type="project" value="InterPro"/>
</dbReference>
<dbReference type="GO" id="GO:0046872">
    <property type="term" value="F:metal ion binding"/>
    <property type="evidence" value="ECO:0007669"/>
    <property type="project" value="UniProtKB-KW"/>
</dbReference>
<dbReference type="GO" id="GO:0004222">
    <property type="term" value="F:metalloendopeptidase activity"/>
    <property type="evidence" value="ECO:0007669"/>
    <property type="project" value="UniProtKB-UniRule"/>
</dbReference>
<dbReference type="GO" id="GO:0004252">
    <property type="term" value="F:serine-type endopeptidase activity"/>
    <property type="evidence" value="ECO:0007669"/>
    <property type="project" value="InterPro"/>
</dbReference>
<dbReference type="GO" id="GO:0000270">
    <property type="term" value="P:peptidoglycan metabolic process"/>
    <property type="evidence" value="ECO:0007669"/>
    <property type="project" value="UniProtKB-UniRule"/>
</dbReference>
<dbReference type="GO" id="GO:0006508">
    <property type="term" value="P:proteolysis"/>
    <property type="evidence" value="ECO:0007669"/>
    <property type="project" value="UniProtKB-KW"/>
</dbReference>
<dbReference type="FunFam" id="3.30.1380.10:FF:000002">
    <property type="entry name" value="Penicillin-insensitive murein endopeptidase"/>
    <property type="match status" value="1"/>
</dbReference>
<dbReference type="Gene3D" id="3.30.1380.10">
    <property type="match status" value="1"/>
</dbReference>
<dbReference type="HAMAP" id="MF_01623">
    <property type="entry name" value="MepA"/>
    <property type="match status" value="1"/>
</dbReference>
<dbReference type="InterPro" id="IPR009045">
    <property type="entry name" value="Hedgehog_sig/DD-Pept_Zn-bd_sf"/>
</dbReference>
<dbReference type="InterPro" id="IPR005073">
    <property type="entry name" value="Peptidase_M74"/>
</dbReference>
<dbReference type="NCBIfam" id="NF006947">
    <property type="entry name" value="PRK09429.1"/>
    <property type="match status" value="1"/>
</dbReference>
<dbReference type="Pfam" id="PF03411">
    <property type="entry name" value="Peptidase_M74"/>
    <property type="match status" value="1"/>
</dbReference>
<dbReference type="PIRSF" id="PIRSF018455">
    <property type="entry name" value="MepA"/>
    <property type="match status" value="1"/>
</dbReference>
<dbReference type="SUPFAM" id="SSF55166">
    <property type="entry name" value="Hedgehog/DD-peptidase"/>
    <property type="match status" value="1"/>
</dbReference>
<sequence>MNKTAIALLALLASSASLAATPWQKITQPVPGSAQSIGSFSNGCIVGADTLPIQSEHYQVMRTDQRRYFGHPDLVMFIQRLSSQVSNLGMGTVLIGDMGMPAGGRFNGGHASHQTGLDVDIFLQLPKTRWTSAQLLRPQALDLVSRDGKHVVSTLWKPEIFSLIKLAAQDKDVTRIFVNPAIKQQLCLDAGTDRDWLRKVRPWFQHRAHMHVRLRCPADSLECEDQPLPPSGDGCGAELQSWFEPPKPGTTKPEKKTPPPLPPSCQALLDEHVI</sequence>
<gene>
    <name evidence="1" type="primary">mepA</name>
    <name type="ordered locus">ECDH10B_2490</name>
</gene>
<comment type="function">
    <text evidence="1">Murein endopeptidase that cleaves the D-alanyl-meso-2,6-diamino-pimelyl amide bond that connects peptidoglycan strands. Likely plays a role in the removal of murein from the sacculus.</text>
</comment>
<comment type="cofactor">
    <cofactor evidence="1">
        <name>Zn(2+)</name>
        <dbReference type="ChEBI" id="CHEBI:29105"/>
    </cofactor>
    <text evidence="1">Binds 2 Zn(2+) ions per subunit. Zn(2+) ion 1 is bound in the active site. Zn(2+) ion 2 is bound at the dimer interface by residues from both subunits.</text>
</comment>
<comment type="subunit">
    <text evidence="1">Dimer.</text>
</comment>
<comment type="subcellular location">
    <subcellularLocation>
        <location evidence="1">Periplasm</location>
    </subcellularLocation>
</comment>
<comment type="similarity">
    <text evidence="1">Belongs to the peptidase M74 family.</text>
</comment>
<feature type="signal peptide" evidence="1">
    <location>
        <begin position="1"/>
        <end position="19"/>
    </location>
</feature>
<feature type="chain" id="PRO_1000186099" description="Penicillin-insensitive murein endopeptidase">
    <location>
        <begin position="20"/>
        <end position="274"/>
    </location>
</feature>
<feature type="region of interest" description="Disordered" evidence="2">
    <location>
        <begin position="228"/>
        <end position="274"/>
    </location>
</feature>
<feature type="binding site" evidence="1">
    <location>
        <position position="110"/>
    </location>
    <ligand>
        <name>Zn(2+)</name>
        <dbReference type="ChEBI" id="CHEBI:29105"/>
        <label>1</label>
    </ligand>
</feature>
<feature type="binding site" evidence="1">
    <location>
        <position position="113"/>
    </location>
    <ligand>
        <name>Zn(2+)</name>
        <dbReference type="ChEBI" id="CHEBI:29105"/>
        <label>1</label>
    </ligand>
</feature>
<feature type="binding site" evidence="1">
    <location>
        <position position="120"/>
    </location>
    <ligand>
        <name>Zn(2+)</name>
        <dbReference type="ChEBI" id="CHEBI:29105"/>
        <label>1</label>
    </ligand>
</feature>
<feature type="binding site" evidence="1">
    <location>
        <position position="147"/>
    </location>
    <ligand>
        <name>Zn(2+)</name>
        <dbReference type="ChEBI" id="CHEBI:29105"/>
        <label>2</label>
    </ligand>
</feature>
<feature type="binding site" evidence="1">
    <location>
        <position position="150"/>
    </location>
    <ligand>
        <name>Zn(2+)</name>
        <dbReference type="ChEBI" id="CHEBI:29105"/>
        <label>2</label>
    </ligand>
</feature>
<feature type="binding site" evidence="1">
    <location>
        <position position="211"/>
    </location>
    <ligand>
        <name>Zn(2+)</name>
        <dbReference type="ChEBI" id="CHEBI:29105"/>
        <label>1</label>
    </ligand>
</feature>
<feature type="disulfide bond" evidence="1">
    <location>
        <begin position="44"/>
        <end position="265"/>
    </location>
</feature>
<feature type="disulfide bond" evidence="1">
    <location>
        <begin position="187"/>
        <end position="235"/>
    </location>
</feature>
<feature type="disulfide bond" evidence="1">
    <location>
        <begin position="216"/>
        <end position="223"/>
    </location>
</feature>
<proteinExistence type="inferred from homology"/>
<accession>B1X939</accession>
<keyword id="KW-1015">Disulfide bond</keyword>
<keyword id="KW-0378">Hydrolase</keyword>
<keyword id="KW-0479">Metal-binding</keyword>
<keyword id="KW-0482">Metalloprotease</keyword>
<keyword id="KW-0574">Periplasm</keyword>
<keyword id="KW-0645">Protease</keyword>
<keyword id="KW-0732">Signal</keyword>
<keyword id="KW-0862">Zinc</keyword>